<comment type="function">
    <text evidence="1">RNA-binding factor involved in multiple aspects of cellular processes like alternative splicing of pre-mRNA and translation regulation. Modulates alternative 5'-splice site and exon selection. Acts as a muscle cell differentiation-promoting factor. Activates exon skipping of the PTB pre-mRNA during muscle cell differentiation. Antagonizes the activity of the splicing factor PTBP1 to modulate muscle cell-specific exon selection of alpha tropomyosin. Binds to intronic pyrimidine-rich sequence of the TPM1 and MAPT pre-mRNAs. Required for the translational activation of PER1 mRNA in response to circadian clock. Binds directly to the 3'-UTR of the PER1 mRNA. Exerts a suppressive activity on Cap-dependent translation via binding to CU-rich responsive elements within the 3'UTR of mRNAs, a process increased under stress conditions or during myocytes differentiation. Recruits EIF4A1 to stimulate IRES-dependent translation initiation in respons to cellular stress. Associates to internal ribosome entry segment (IRES) in target mRNA species under stress conditions. Plays a role for miRNA-guided RNA cleavage and translation suppression by promoting association of AGO2-containing miRNPs with their cognate target mRNAs. Associates with miRNAs during muscle cell differentiation. Binds preferentially to 5'-CGCGCG[GCA]-3' motif in vitro (By similarity).</text>
</comment>
<comment type="subunit">
    <text evidence="2">Interacts with TNPO3; the interaction mediates nuclear import of the protein and is disrupted by nuclear Ran bound to GTP. Interacts with EIF4G1 and WT1. Interacts with EIF4A1; the interaction is modulated under stress-induced conditions. Interacts with AGO1. Interacts with AGO2; the interaction occurs under both cell proliferation and differentiation conditions and in an RNA- and phosphorylation-independent manner. Interacts with DDX5; the interaction occurs in an RNA-independent manner. Interacts with RBPMS; the interaction allows cooperative assembly of RNA-bound stable cell-specific alternative splicing regulatory complexes.</text>
</comment>
<comment type="subcellular location">
    <subcellularLocation>
        <location evidence="1">Nucleus</location>
    </subcellularLocation>
    <subcellularLocation>
        <location evidence="1">Nucleus</location>
        <location evidence="1">Nucleolus</location>
    </subcellularLocation>
    <subcellularLocation>
        <location evidence="1">Nucleus speckle</location>
    </subcellularLocation>
    <subcellularLocation>
        <location evidence="1">Cytoplasm</location>
    </subcellularLocation>
    <subcellularLocation>
        <location evidence="1">Cytoplasmic granule</location>
    </subcellularLocation>
    <text evidence="1">Undergoes continuous nucleocytoplasmic shuttling. Upon nuclear import colocalizes with SR proteins in nuclear speckles. Arsenite stress-induced phosphorylation increases its subcellular relocalization from the nucleus to the cytoplasm and to cytoplasmic stress granules (SG) via a p38 MAPK signaling pathway. Primarily localized in nucleus and nucleoli under cell growth conditions and accumulated in the cytoplasm and cytoplasm perinuclear granules upon muscle cell differentiation (By similarity).</text>
</comment>
<comment type="PTM">
    <text evidence="1">Phosphorylated. Phosphorylated in vitro on Ser-307 by SRPK1. Phosphorylation on Ser-307 is induced upon cell stress signaling, which alters its subcellular localization and may modulate its activity on IRES-mediated mRNA translation. Phosphorylation on Ser-307 is induced upon cell muscle differentiation (By similarity).</text>
</comment>
<name>RBM4_BOVIN</name>
<reference key="1">
    <citation type="journal article" date="2005" name="BMC Genomics">
        <title>Characterization of 954 bovine full-CDS cDNA sequences.</title>
        <authorList>
            <person name="Harhay G.P."/>
            <person name="Sonstegard T.S."/>
            <person name="Keele J.W."/>
            <person name="Heaton M.P."/>
            <person name="Clawson M.L."/>
            <person name="Snelling W.M."/>
            <person name="Wiedmann R.T."/>
            <person name="Van Tassell C.P."/>
            <person name="Smith T.P.L."/>
        </authorList>
    </citation>
    <scope>NUCLEOTIDE SEQUENCE [LARGE SCALE MRNA]</scope>
</reference>
<reference key="2">
    <citation type="submission" date="2005-09" db="EMBL/GenBank/DDBJ databases">
        <authorList>
            <consortium name="NIH - Mammalian Gene Collection (MGC) project"/>
        </authorList>
    </citation>
    <scope>NUCLEOTIDE SEQUENCE [LARGE SCALE MRNA]</scope>
    <source>
        <strain>Hereford</strain>
        <tissue>Uterus</tissue>
    </source>
</reference>
<organism>
    <name type="scientific">Bos taurus</name>
    <name type="common">Bovine</name>
    <dbReference type="NCBI Taxonomy" id="9913"/>
    <lineage>
        <taxon>Eukaryota</taxon>
        <taxon>Metazoa</taxon>
        <taxon>Chordata</taxon>
        <taxon>Craniata</taxon>
        <taxon>Vertebrata</taxon>
        <taxon>Euteleostomi</taxon>
        <taxon>Mammalia</taxon>
        <taxon>Eutheria</taxon>
        <taxon>Laurasiatheria</taxon>
        <taxon>Artiodactyla</taxon>
        <taxon>Ruminantia</taxon>
        <taxon>Pecora</taxon>
        <taxon>Bovidae</taxon>
        <taxon>Bovinae</taxon>
        <taxon>Bos</taxon>
    </lineage>
</organism>
<sequence length="362" mass="40077">MVKLFIGNLPREATEQEIRSLFEQYGKVLECDIIKNYGFVHIEDKTAAEDAIRNLHHYKLHGVNINVEASKNKSKTSTKLHVGNISPTCTNKELRAKFEEYGPVIECDIVKDYAFVHMERAEDAVEAIRGLDNTEFQGKRMHVQLSTSRLRTAPGMGDQSGCYRCGKEGHWSKECPVDRSGRVADFTEQYNEQYGAVRTPYTMGYGDSLYYNNAYGALDAYYKRCRAARSYEAVAAAAASAYNYAEQTLSQLPQVQNTAMASHLTSTSLDPYDRHLLPTSGAAAAAAAAAAAAVTAASSSYYGRDRSPLRRATGPVPTVGEGYGYGHESELSQGSSAARNSLYDMARYEREQYADRARYSAF</sequence>
<dbReference type="EMBL" id="BT030489">
    <property type="protein sequence ID" value="ABQ12929.1"/>
    <property type="molecule type" value="mRNA"/>
</dbReference>
<dbReference type="EMBL" id="BC104570">
    <property type="protein sequence ID" value="AAI04571.1"/>
    <property type="molecule type" value="mRNA"/>
</dbReference>
<dbReference type="RefSeq" id="NP_001070478.1">
    <property type="nucleotide sequence ID" value="NM_001077010.1"/>
</dbReference>
<dbReference type="RefSeq" id="XP_024843128.1">
    <property type="nucleotide sequence ID" value="XM_024987360.2"/>
</dbReference>
<dbReference type="SMR" id="Q3MHX3"/>
<dbReference type="FunCoup" id="Q3MHX3">
    <property type="interactions" value="1796"/>
</dbReference>
<dbReference type="STRING" id="9913.ENSBTAP00000000541"/>
<dbReference type="PaxDb" id="9913-ENSBTAP00000000541"/>
<dbReference type="PeptideAtlas" id="Q3MHX3"/>
<dbReference type="Ensembl" id="ENSBTAT00000000541.6">
    <property type="protein sequence ID" value="ENSBTAP00000000541.5"/>
    <property type="gene ID" value="ENSBTAG00000031688.5"/>
</dbReference>
<dbReference type="GeneID" id="767937"/>
<dbReference type="KEGG" id="bta:767937"/>
<dbReference type="CTD" id="5936"/>
<dbReference type="VEuPathDB" id="HostDB:ENSBTAG00000031688"/>
<dbReference type="VGNC" id="VGNC:112659">
    <property type="gene designation" value="RBM4"/>
</dbReference>
<dbReference type="eggNOG" id="KOG0109">
    <property type="taxonomic scope" value="Eukaryota"/>
</dbReference>
<dbReference type="GeneTree" id="ENSGT00940000154421"/>
<dbReference type="HOGENOM" id="CLU_045263_0_0_1"/>
<dbReference type="InParanoid" id="Q3MHX3"/>
<dbReference type="OMA" id="PECAYER"/>
<dbReference type="OrthoDB" id="79941at2759"/>
<dbReference type="TreeFam" id="TF320661"/>
<dbReference type="Proteomes" id="UP000009136">
    <property type="component" value="Chromosome 29"/>
</dbReference>
<dbReference type="Bgee" id="ENSBTAG00000031688">
    <property type="expression patterns" value="Expressed in retina and 109 other cell types or tissues"/>
</dbReference>
<dbReference type="GO" id="GO:0005737">
    <property type="term" value="C:cytoplasm"/>
    <property type="evidence" value="ECO:0000250"/>
    <property type="project" value="UniProtKB"/>
</dbReference>
<dbReference type="GO" id="GO:0010494">
    <property type="term" value="C:cytoplasmic stress granule"/>
    <property type="evidence" value="ECO:0000250"/>
    <property type="project" value="UniProtKB"/>
</dbReference>
<dbReference type="GO" id="GO:0005829">
    <property type="term" value="C:cytosol"/>
    <property type="evidence" value="ECO:0007669"/>
    <property type="project" value="Ensembl"/>
</dbReference>
<dbReference type="GO" id="GO:0016607">
    <property type="term" value="C:nuclear speck"/>
    <property type="evidence" value="ECO:0000250"/>
    <property type="project" value="UniProtKB"/>
</dbReference>
<dbReference type="GO" id="GO:0005730">
    <property type="term" value="C:nucleolus"/>
    <property type="evidence" value="ECO:0000250"/>
    <property type="project" value="UniProtKB"/>
</dbReference>
<dbReference type="GO" id="GO:0005654">
    <property type="term" value="C:nucleoplasm"/>
    <property type="evidence" value="ECO:0000250"/>
    <property type="project" value="UniProtKB"/>
</dbReference>
<dbReference type="GO" id="GO:0005634">
    <property type="term" value="C:nucleus"/>
    <property type="evidence" value="ECO:0000250"/>
    <property type="project" value="UniProtKB"/>
</dbReference>
<dbReference type="GO" id="GO:0048471">
    <property type="term" value="C:perinuclear region of cytoplasm"/>
    <property type="evidence" value="ECO:0007669"/>
    <property type="project" value="Ensembl"/>
</dbReference>
<dbReference type="GO" id="GO:0030332">
    <property type="term" value="F:cyclin binding"/>
    <property type="evidence" value="ECO:0007669"/>
    <property type="project" value="Ensembl"/>
</dbReference>
<dbReference type="GO" id="GO:0035198">
    <property type="term" value="F:miRNA binding"/>
    <property type="evidence" value="ECO:0000250"/>
    <property type="project" value="UniProtKB"/>
</dbReference>
<dbReference type="GO" id="GO:0003730">
    <property type="term" value="F:mRNA 3'-UTR binding"/>
    <property type="evidence" value="ECO:0000250"/>
    <property type="project" value="UniProtKB"/>
</dbReference>
<dbReference type="GO" id="GO:0003729">
    <property type="term" value="F:mRNA binding"/>
    <property type="evidence" value="ECO:0000250"/>
    <property type="project" value="UniProtKB"/>
</dbReference>
<dbReference type="GO" id="GO:0036002">
    <property type="term" value="F:pre-mRNA binding"/>
    <property type="evidence" value="ECO:0000250"/>
    <property type="project" value="UniProtKB"/>
</dbReference>
<dbReference type="GO" id="GO:0097157">
    <property type="term" value="F:pre-mRNA intronic binding"/>
    <property type="evidence" value="ECO:0000250"/>
    <property type="project" value="UniProtKB"/>
</dbReference>
<dbReference type="GO" id="GO:0097158">
    <property type="term" value="F:pre-mRNA intronic pyrimidine-rich binding"/>
    <property type="evidence" value="ECO:0000250"/>
    <property type="project" value="UniProtKB"/>
</dbReference>
<dbReference type="GO" id="GO:0003723">
    <property type="term" value="F:RNA binding"/>
    <property type="evidence" value="ECO:0000250"/>
    <property type="project" value="UniProtKB"/>
</dbReference>
<dbReference type="GO" id="GO:0008270">
    <property type="term" value="F:zinc ion binding"/>
    <property type="evidence" value="ECO:0007669"/>
    <property type="project" value="UniProtKB-KW"/>
</dbReference>
<dbReference type="GO" id="GO:0002190">
    <property type="term" value="P:cap-independent translational initiation"/>
    <property type="evidence" value="ECO:0000250"/>
    <property type="project" value="UniProtKB"/>
</dbReference>
<dbReference type="GO" id="GO:0032922">
    <property type="term" value="P:circadian regulation of gene expression"/>
    <property type="evidence" value="ECO:0007669"/>
    <property type="project" value="Ensembl"/>
</dbReference>
<dbReference type="GO" id="GO:0097167">
    <property type="term" value="P:circadian regulation of translation"/>
    <property type="evidence" value="ECO:0000250"/>
    <property type="project" value="UniProtKB"/>
</dbReference>
<dbReference type="GO" id="GO:0035883">
    <property type="term" value="P:enteroendocrine cell differentiation"/>
    <property type="evidence" value="ECO:0007669"/>
    <property type="project" value="Ensembl"/>
</dbReference>
<dbReference type="GO" id="GO:0043153">
    <property type="term" value="P:entrainment of circadian clock by photoperiod"/>
    <property type="evidence" value="ECO:0000250"/>
    <property type="project" value="UniProtKB"/>
</dbReference>
<dbReference type="GO" id="GO:0035773">
    <property type="term" value="P:insulin secretion involved in cellular response to glucose stimulus"/>
    <property type="evidence" value="ECO:0007669"/>
    <property type="project" value="Ensembl"/>
</dbReference>
<dbReference type="GO" id="GO:0002192">
    <property type="term" value="P:IRES-dependent translational initiation of linear mRNA"/>
    <property type="evidence" value="ECO:0000250"/>
    <property type="project" value="UniProtKB"/>
</dbReference>
<dbReference type="GO" id="GO:0035278">
    <property type="term" value="P:miRNA-mediated gene silencing by inhibition of translation"/>
    <property type="evidence" value="ECO:0000250"/>
    <property type="project" value="UniProtKB"/>
</dbReference>
<dbReference type="GO" id="GO:0006397">
    <property type="term" value="P:mRNA processing"/>
    <property type="evidence" value="ECO:0007669"/>
    <property type="project" value="UniProtKB-KW"/>
</dbReference>
<dbReference type="GO" id="GO:0017148">
    <property type="term" value="P:negative regulation of translation"/>
    <property type="evidence" value="ECO:0000250"/>
    <property type="project" value="UniProtKB"/>
</dbReference>
<dbReference type="GO" id="GO:0032055">
    <property type="term" value="P:negative regulation of translation in response to stress"/>
    <property type="evidence" value="ECO:0000250"/>
    <property type="project" value="UniProtKB"/>
</dbReference>
<dbReference type="GO" id="GO:0045947">
    <property type="term" value="P:negative regulation of translational initiation"/>
    <property type="evidence" value="ECO:0000250"/>
    <property type="project" value="UniProtKB"/>
</dbReference>
<dbReference type="GO" id="GO:0031016">
    <property type="term" value="P:pancreas development"/>
    <property type="evidence" value="ECO:0007669"/>
    <property type="project" value="Ensembl"/>
</dbReference>
<dbReference type="GO" id="GO:0051149">
    <property type="term" value="P:positive regulation of muscle cell differentiation"/>
    <property type="evidence" value="ECO:0000250"/>
    <property type="project" value="UniProtKB"/>
</dbReference>
<dbReference type="GO" id="GO:0045727">
    <property type="term" value="P:positive regulation of translation"/>
    <property type="evidence" value="ECO:0007669"/>
    <property type="project" value="Ensembl"/>
</dbReference>
<dbReference type="GO" id="GO:0000381">
    <property type="term" value="P:regulation of alternative mRNA splicing, via spliceosome"/>
    <property type="evidence" value="ECO:0000250"/>
    <property type="project" value="UniProtKB"/>
</dbReference>
<dbReference type="GO" id="GO:0046626">
    <property type="term" value="P:regulation of insulin receptor signaling pathway"/>
    <property type="evidence" value="ECO:0007669"/>
    <property type="project" value="Ensembl"/>
</dbReference>
<dbReference type="GO" id="GO:0046822">
    <property type="term" value="P:regulation of nucleocytoplasmic transport"/>
    <property type="evidence" value="ECO:0000250"/>
    <property type="project" value="UniProtKB"/>
</dbReference>
<dbReference type="GO" id="GO:0046685">
    <property type="term" value="P:response to arsenic-containing substance"/>
    <property type="evidence" value="ECO:0000250"/>
    <property type="project" value="UniProtKB"/>
</dbReference>
<dbReference type="GO" id="GO:0008380">
    <property type="term" value="P:RNA splicing"/>
    <property type="evidence" value="ECO:0007669"/>
    <property type="project" value="UniProtKB-KW"/>
</dbReference>
<dbReference type="CDD" id="cd12606">
    <property type="entry name" value="RRM1_RBM4"/>
    <property type="match status" value="1"/>
</dbReference>
<dbReference type="CDD" id="cd12607">
    <property type="entry name" value="RRM2_RBM4"/>
    <property type="match status" value="1"/>
</dbReference>
<dbReference type="FunFam" id="3.30.70.330:FF:000058">
    <property type="entry name" value="RNA-binding motif protein 4"/>
    <property type="match status" value="1"/>
</dbReference>
<dbReference type="FunFam" id="3.30.70.330:FF:000085">
    <property type="entry name" value="RNA-binding protein 4 isoform X1"/>
    <property type="match status" value="1"/>
</dbReference>
<dbReference type="FunFam" id="4.10.60.10:FF:000015">
    <property type="entry name" value="RNA-binding protein 4B isoform X1"/>
    <property type="match status" value="1"/>
</dbReference>
<dbReference type="Gene3D" id="3.30.70.330">
    <property type="match status" value="2"/>
</dbReference>
<dbReference type="Gene3D" id="4.10.60.10">
    <property type="entry name" value="Zinc finger, CCHC-type"/>
    <property type="match status" value="1"/>
</dbReference>
<dbReference type="InterPro" id="IPR050502">
    <property type="entry name" value="Euk_RNA-bind_prot"/>
</dbReference>
<dbReference type="InterPro" id="IPR012677">
    <property type="entry name" value="Nucleotide-bd_a/b_plait_sf"/>
</dbReference>
<dbReference type="InterPro" id="IPR035979">
    <property type="entry name" value="RBD_domain_sf"/>
</dbReference>
<dbReference type="InterPro" id="IPR034897">
    <property type="entry name" value="RBM4_RRM1"/>
</dbReference>
<dbReference type="InterPro" id="IPR034898">
    <property type="entry name" value="RBM4_RRM2"/>
</dbReference>
<dbReference type="InterPro" id="IPR000504">
    <property type="entry name" value="RRM_dom"/>
</dbReference>
<dbReference type="InterPro" id="IPR001878">
    <property type="entry name" value="Znf_CCHC"/>
</dbReference>
<dbReference type="PANTHER" id="PTHR48025:SF26">
    <property type="entry name" value="HETEROGENEOUS NUCLEAR RIBONUCLEOPROTEIN M-RELATED"/>
    <property type="match status" value="1"/>
</dbReference>
<dbReference type="PANTHER" id="PTHR48025">
    <property type="entry name" value="OS02G0815200 PROTEIN"/>
    <property type="match status" value="1"/>
</dbReference>
<dbReference type="Pfam" id="PF00076">
    <property type="entry name" value="RRM_1"/>
    <property type="match status" value="2"/>
</dbReference>
<dbReference type="Pfam" id="PF00098">
    <property type="entry name" value="zf-CCHC"/>
    <property type="match status" value="1"/>
</dbReference>
<dbReference type="SMART" id="SM00360">
    <property type="entry name" value="RRM"/>
    <property type="match status" value="2"/>
</dbReference>
<dbReference type="SMART" id="SM00343">
    <property type="entry name" value="ZnF_C2HC"/>
    <property type="match status" value="1"/>
</dbReference>
<dbReference type="SUPFAM" id="SSF54928">
    <property type="entry name" value="RNA-binding domain, RBD"/>
    <property type="match status" value="2"/>
</dbReference>
<dbReference type="PROSITE" id="PS50102">
    <property type="entry name" value="RRM"/>
    <property type="match status" value="2"/>
</dbReference>
<dbReference type="PROSITE" id="PS50158">
    <property type="entry name" value="ZF_CCHC"/>
    <property type="match status" value="1"/>
</dbReference>
<keyword id="KW-0010">Activator</keyword>
<keyword id="KW-0963">Cytoplasm</keyword>
<keyword id="KW-0221">Differentiation</keyword>
<keyword id="KW-1017">Isopeptide bond</keyword>
<keyword id="KW-0479">Metal-binding</keyword>
<keyword id="KW-0507">mRNA processing</keyword>
<keyword id="KW-0508">mRNA splicing</keyword>
<keyword id="KW-0539">Nucleus</keyword>
<keyword id="KW-0597">Phosphoprotein</keyword>
<keyword id="KW-1185">Reference proteome</keyword>
<keyword id="KW-0677">Repeat</keyword>
<keyword id="KW-0694">RNA-binding</keyword>
<keyword id="KW-0943">RNA-mediated gene silencing</keyword>
<keyword id="KW-0832">Ubl conjugation</keyword>
<keyword id="KW-0862">Zinc</keyword>
<keyword id="KW-0863">Zinc-finger</keyword>
<feature type="chain" id="PRO_0000230983" description="RNA-binding protein 4">
    <location>
        <begin position="1"/>
        <end position="362"/>
    </location>
</feature>
<feature type="domain" description="RRM 1" evidence="4">
    <location>
        <begin position="2"/>
        <end position="72"/>
    </location>
</feature>
<feature type="domain" description="RRM 2" evidence="4">
    <location>
        <begin position="78"/>
        <end position="148"/>
    </location>
</feature>
<feature type="zinc finger region" description="CCHC-type" evidence="3">
    <location>
        <begin position="160"/>
        <end position="177"/>
    </location>
</feature>
<feature type="region of interest" description="Interaction with TNPO3" evidence="1">
    <location>
        <begin position="196"/>
        <end position="362"/>
    </location>
</feature>
<feature type="region of interest" description="Disordered" evidence="5">
    <location>
        <begin position="306"/>
        <end position="336"/>
    </location>
</feature>
<feature type="modified residue" description="Phosphoserine" evidence="2">
    <location>
        <position position="86"/>
    </location>
</feature>
<feature type="modified residue" description="Phosphoserine" evidence="2">
    <location>
        <position position="307"/>
    </location>
</feature>
<feature type="cross-link" description="Glycyl lysine isopeptide (Lys-Gly) (interchain with G-Cter in SUMO2)" evidence="2">
    <location>
        <position position="79"/>
    </location>
</feature>
<feature type="cross-link" description="Glycyl lysine isopeptide (Lys-Gly) (interchain with G-Cter in SUMO2)" evidence="2">
    <location>
        <position position="92"/>
    </location>
</feature>
<protein>
    <recommendedName>
        <fullName>RNA-binding protein 4</fullName>
    </recommendedName>
    <alternativeName>
        <fullName>RNA-binding motif protein 4</fullName>
    </alternativeName>
    <alternativeName>
        <fullName>RNA-binding motif protein 4a</fullName>
    </alternativeName>
</protein>
<accession>Q3MHX3</accession>
<accession>A5D970</accession>
<gene>
    <name type="primary">RBM4</name>
    <name type="synonym">RBM4A</name>
</gene>
<proteinExistence type="evidence at transcript level"/>
<evidence type="ECO:0000250" key="1"/>
<evidence type="ECO:0000250" key="2">
    <source>
        <dbReference type="UniProtKB" id="Q9BWF3"/>
    </source>
</evidence>
<evidence type="ECO:0000255" key="3">
    <source>
        <dbReference type="PROSITE-ProRule" id="PRU00047"/>
    </source>
</evidence>
<evidence type="ECO:0000255" key="4">
    <source>
        <dbReference type="PROSITE-ProRule" id="PRU00176"/>
    </source>
</evidence>
<evidence type="ECO:0000256" key="5">
    <source>
        <dbReference type="SAM" id="MobiDB-lite"/>
    </source>
</evidence>